<comment type="function">
    <text evidence="1">Binds to DNA non-specifically. Could be a regulatory factor involved in maltose metabolism.</text>
</comment>
<comment type="similarity">
    <text evidence="1">Belongs to the SfsA family.</text>
</comment>
<gene>
    <name evidence="1" type="primary">sfsA</name>
    <name type="ordered locus">SSPA0189</name>
</gene>
<keyword id="KW-0238">DNA-binding</keyword>
<proteinExistence type="inferred from homology"/>
<sequence length="234" mass="26220">MLFSPPLQRATLIQRYKRFLADVITPDGTTLTLHCPNTGAMTGCATPGDTVWYSTSENTKRKYPHTWELTETQFGAFICVNTLRANQLTKEAIQENRLPALAGYNILKSEVKYGAERSRIDFMLQADFRPDCYIEVKSVTLAEKENGYFPDAITERGQKHLRELMGVAAAGHRAVVVFAVLHSAITRFSPARHIDIKYAQLLSEAQNKGVEVLAYKAELSAQKMELNEPVPITL</sequence>
<evidence type="ECO:0000255" key="1">
    <source>
        <dbReference type="HAMAP-Rule" id="MF_00095"/>
    </source>
</evidence>
<name>SFSA_SALPK</name>
<feature type="chain" id="PRO_1000093591" description="Sugar fermentation stimulation protein A">
    <location>
        <begin position="1"/>
        <end position="234"/>
    </location>
</feature>
<feature type="DNA-binding region" description="H-T-H motif" evidence="1">
    <location>
        <begin position="201"/>
        <end position="220"/>
    </location>
</feature>
<reference key="1">
    <citation type="journal article" date="2009" name="BMC Genomics">
        <title>Pseudogene accumulation in the evolutionary histories of Salmonella enterica serovars Paratyphi A and Typhi.</title>
        <authorList>
            <person name="Holt K.E."/>
            <person name="Thomson N.R."/>
            <person name="Wain J."/>
            <person name="Langridge G.C."/>
            <person name="Hasan R."/>
            <person name="Bhutta Z.A."/>
            <person name="Quail M.A."/>
            <person name="Norbertczak H."/>
            <person name="Walker D."/>
            <person name="Simmonds M."/>
            <person name="White B."/>
            <person name="Bason N."/>
            <person name="Mungall K."/>
            <person name="Dougan G."/>
            <person name="Parkhill J."/>
        </authorList>
    </citation>
    <scope>NUCLEOTIDE SEQUENCE [LARGE SCALE GENOMIC DNA]</scope>
    <source>
        <strain>AKU_12601</strain>
    </source>
</reference>
<dbReference type="EMBL" id="FM200053">
    <property type="protein sequence ID" value="CAR58300.1"/>
    <property type="molecule type" value="Genomic_DNA"/>
</dbReference>
<dbReference type="RefSeq" id="WP_000899408.1">
    <property type="nucleotide sequence ID" value="NC_011147.1"/>
</dbReference>
<dbReference type="SMR" id="B5BL70"/>
<dbReference type="KEGG" id="sek:SSPA0189"/>
<dbReference type="HOGENOM" id="CLU_052299_2_0_6"/>
<dbReference type="Proteomes" id="UP000001869">
    <property type="component" value="Chromosome"/>
</dbReference>
<dbReference type="GO" id="GO:0003677">
    <property type="term" value="F:DNA binding"/>
    <property type="evidence" value="ECO:0007669"/>
    <property type="project" value="UniProtKB-KW"/>
</dbReference>
<dbReference type="CDD" id="cd22359">
    <property type="entry name" value="SfsA-like_bacterial"/>
    <property type="match status" value="1"/>
</dbReference>
<dbReference type="FunFam" id="2.40.50.580:FF:000001">
    <property type="entry name" value="Sugar fermentation stimulation protein A"/>
    <property type="match status" value="1"/>
</dbReference>
<dbReference type="FunFam" id="3.40.1350.60:FF:000001">
    <property type="entry name" value="Sugar fermentation stimulation protein A"/>
    <property type="match status" value="1"/>
</dbReference>
<dbReference type="Gene3D" id="2.40.50.580">
    <property type="match status" value="1"/>
</dbReference>
<dbReference type="Gene3D" id="3.40.1350.60">
    <property type="match status" value="1"/>
</dbReference>
<dbReference type="HAMAP" id="MF_00095">
    <property type="entry name" value="SfsA"/>
    <property type="match status" value="1"/>
</dbReference>
<dbReference type="InterPro" id="IPR005224">
    <property type="entry name" value="SfsA"/>
</dbReference>
<dbReference type="InterPro" id="IPR040452">
    <property type="entry name" value="SfsA_C"/>
</dbReference>
<dbReference type="InterPro" id="IPR041465">
    <property type="entry name" value="SfsA_N"/>
</dbReference>
<dbReference type="NCBIfam" id="TIGR00230">
    <property type="entry name" value="sfsA"/>
    <property type="match status" value="1"/>
</dbReference>
<dbReference type="PANTHER" id="PTHR30545">
    <property type="entry name" value="SUGAR FERMENTATION STIMULATION PROTEIN A"/>
    <property type="match status" value="1"/>
</dbReference>
<dbReference type="PANTHER" id="PTHR30545:SF2">
    <property type="entry name" value="SUGAR FERMENTATION STIMULATION PROTEIN A"/>
    <property type="match status" value="1"/>
</dbReference>
<dbReference type="Pfam" id="PF03749">
    <property type="entry name" value="SfsA"/>
    <property type="match status" value="1"/>
</dbReference>
<dbReference type="Pfam" id="PF17746">
    <property type="entry name" value="SfsA_N"/>
    <property type="match status" value="1"/>
</dbReference>
<organism>
    <name type="scientific">Salmonella paratyphi A (strain AKU_12601)</name>
    <dbReference type="NCBI Taxonomy" id="554290"/>
    <lineage>
        <taxon>Bacteria</taxon>
        <taxon>Pseudomonadati</taxon>
        <taxon>Pseudomonadota</taxon>
        <taxon>Gammaproteobacteria</taxon>
        <taxon>Enterobacterales</taxon>
        <taxon>Enterobacteriaceae</taxon>
        <taxon>Salmonella</taxon>
    </lineage>
</organism>
<protein>
    <recommendedName>
        <fullName evidence="1">Sugar fermentation stimulation protein A</fullName>
    </recommendedName>
</protein>
<accession>B5BL70</accession>